<keyword id="KW-0002">3D-structure</keyword>
<keyword id="KW-0456">Lyase</keyword>
<keyword id="KW-1185">Reference proteome</keyword>
<reference key="1">
    <citation type="journal article" date="1996" name="Microbiology">
        <title>Sequence analysis of the Bacillus subtilis chromosome region between the serA and kdg loci cloned in a yeast artificial chromosome.</title>
        <authorList>
            <person name="Sorokin A.V."/>
            <person name="Azevedo V."/>
            <person name="Zumstein E."/>
            <person name="Galleron N."/>
            <person name="Ehrlich S.D."/>
            <person name="Serror P."/>
        </authorList>
    </citation>
    <scope>NUCLEOTIDE SEQUENCE [GENOMIC DNA]</scope>
    <source>
        <strain>168 / Marburg / ATCC 6051 / DSM 10 / JCM 1465 / NBRC 13719 / NCIMB 3610 / NRRL NRS-744 / VKM B-501</strain>
    </source>
</reference>
<reference key="2">
    <citation type="journal article" date="1997" name="Nature">
        <title>The complete genome sequence of the Gram-positive bacterium Bacillus subtilis.</title>
        <authorList>
            <person name="Kunst F."/>
            <person name="Ogasawara N."/>
            <person name="Moszer I."/>
            <person name="Albertini A.M."/>
            <person name="Alloni G."/>
            <person name="Azevedo V."/>
            <person name="Bertero M.G."/>
            <person name="Bessieres P."/>
            <person name="Bolotin A."/>
            <person name="Borchert S."/>
            <person name="Borriss R."/>
            <person name="Boursier L."/>
            <person name="Brans A."/>
            <person name="Braun M."/>
            <person name="Brignell S.C."/>
            <person name="Bron S."/>
            <person name="Brouillet S."/>
            <person name="Bruschi C.V."/>
            <person name="Caldwell B."/>
            <person name="Capuano V."/>
            <person name="Carter N.M."/>
            <person name="Choi S.-K."/>
            <person name="Codani J.-J."/>
            <person name="Connerton I.F."/>
            <person name="Cummings N.J."/>
            <person name="Daniel R.A."/>
            <person name="Denizot F."/>
            <person name="Devine K.M."/>
            <person name="Duesterhoeft A."/>
            <person name="Ehrlich S.D."/>
            <person name="Emmerson P.T."/>
            <person name="Entian K.-D."/>
            <person name="Errington J."/>
            <person name="Fabret C."/>
            <person name="Ferrari E."/>
            <person name="Foulger D."/>
            <person name="Fritz C."/>
            <person name="Fujita M."/>
            <person name="Fujita Y."/>
            <person name="Fuma S."/>
            <person name="Galizzi A."/>
            <person name="Galleron N."/>
            <person name="Ghim S.-Y."/>
            <person name="Glaser P."/>
            <person name="Goffeau A."/>
            <person name="Golightly E.J."/>
            <person name="Grandi G."/>
            <person name="Guiseppi G."/>
            <person name="Guy B.J."/>
            <person name="Haga K."/>
            <person name="Haiech J."/>
            <person name="Harwood C.R."/>
            <person name="Henaut A."/>
            <person name="Hilbert H."/>
            <person name="Holsappel S."/>
            <person name="Hosono S."/>
            <person name="Hullo M.-F."/>
            <person name="Itaya M."/>
            <person name="Jones L.-M."/>
            <person name="Joris B."/>
            <person name="Karamata D."/>
            <person name="Kasahara Y."/>
            <person name="Klaerr-Blanchard M."/>
            <person name="Klein C."/>
            <person name="Kobayashi Y."/>
            <person name="Koetter P."/>
            <person name="Koningstein G."/>
            <person name="Krogh S."/>
            <person name="Kumano M."/>
            <person name="Kurita K."/>
            <person name="Lapidus A."/>
            <person name="Lardinois S."/>
            <person name="Lauber J."/>
            <person name="Lazarevic V."/>
            <person name="Lee S.-M."/>
            <person name="Levine A."/>
            <person name="Liu H."/>
            <person name="Masuda S."/>
            <person name="Mauel C."/>
            <person name="Medigue C."/>
            <person name="Medina N."/>
            <person name="Mellado R.P."/>
            <person name="Mizuno M."/>
            <person name="Moestl D."/>
            <person name="Nakai S."/>
            <person name="Noback M."/>
            <person name="Noone D."/>
            <person name="O'Reilly M."/>
            <person name="Ogawa K."/>
            <person name="Ogiwara A."/>
            <person name="Oudega B."/>
            <person name="Park S.-H."/>
            <person name="Parro V."/>
            <person name="Pohl T.M."/>
            <person name="Portetelle D."/>
            <person name="Porwollik S."/>
            <person name="Prescott A.M."/>
            <person name="Presecan E."/>
            <person name="Pujic P."/>
            <person name="Purnelle B."/>
            <person name="Rapoport G."/>
            <person name="Rey M."/>
            <person name="Reynolds S."/>
            <person name="Rieger M."/>
            <person name="Rivolta C."/>
            <person name="Rocha E."/>
            <person name="Roche B."/>
            <person name="Rose M."/>
            <person name="Sadaie Y."/>
            <person name="Sato T."/>
            <person name="Scanlan E."/>
            <person name="Schleich S."/>
            <person name="Schroeter R."/>
            <person name="Scoffone F."/>
            <person name="Sekiguchi J."/>
            <person name="Sekowska A."/>
            <person name="Seror S.J."/>
            <person name="Serror P."/>
            <person name="Shin B.-S."/>
            <person name="Soldo B."/>
            <person name="Sorokin A."/>
            <person name="Tacconi E."/>
            <person name="Takagi T."/>
            <person name="Takahashi H."/>
            <person name="Takemaru K."/>
            <person name="Takeuchi M."/>
            <person name="Tamakoshi A."/>
            <person name="Tanaka T."/>
            <person name="Terpstra P."/>
            <person name="Tognoni A."/>
            <person name="Tosato V."/>
            <person name="Uchiyama S."/>
            <person name="Vandenbol M."/>
            <person name="Vannier F."/>
            <person name="Vassarotti A."/>
            <person name="Viari A."/>
            <person name="Wambutt R."/>
            <person name="Wedler E."/>
            <person name="Wedler H."/>
            <person name="Weitzenegger T."/>
            <person name="Winters P."/>
            <person name="Wipat A."/>
            <person name="Yamamoto H."/>
            <person name="Yamane K."/>
            <person name="Yasumoto K."/>
            <person name="Yata K."/>
            <person name="Yoshida K."/>
            <person name="Yoshikawa H.-F."/>
            <person name="Zumstein E."/>
            <person name="Yoshikawa H."/>
            <person name="Danchin A."/>
        </authorList>
    </citation>
    <scope>NUCLEOTIDE SEQUENCE [LARGE SCALE GENOMIC DNA]</scope>
    <source>
        <strain>168</strain>
    </source>
</reference>
<evidence type="ECO:0000255" key="1">
    <source>
        <dbReference type="HAMAP-Rule" id="MF_00549"/>
    </source>
</evidence>
<evidence type="ECO:0000305" key="2"/>
<evidence type="ECO:0007829" key="3">
    <source>
        <dbReference type="PDB" id="6F2C"/>
    </source>
</evidence>
<comment type="function">
    <text evidence="1">Catalyzes the formation of methylglyoxal from dihydroxyacetone phosphate.</text>
</comment>
<comment type="catalytic activity">
    <reaction evidence="1">
        <text>dihydroxyacetone phosphate = methylglyoxal + phosphate</text>
        <dbReference type="Rhea" id="RHEA:17937"/>
        <dbReference type="ChEBI" id="CHEBI:17158"/>
        <dbReference type="ChEBI" id="CHEBI:43474"/>
        <dbReference type="ChEBI" id="CHEBI:57642"/>
        <dbReference type="EC" id="4.2.3.3"/>
    </reaction>
</comment>
<comment type="similarity">
    <text evidence="1 2">Belongs to the methylglyoxal synthase family.</text>
</comment>
<gene>
    <name evidence="1" type="primary">mgsA</name>
    <name type="synonym">ypjF</name>
    <name type="ordered locus">BSU22480</name>
</gene>
<name>MGSA_BACSU</name>
<organism>
    <name type="scientific">Bacillus subtilis (strain 168)</name>
    <dbReference type="NCBI Taxonomy" id="224308"/>
    <lineage>
        <taxon>Bacteria</taxon>
        <taxon>Bacillati</taxon>
        <taxon>Bacillota</taxon>
        <taxon>Bacilli</taxon>
        <taxon>Bacillales</taxon>
        <taxon>Bacillaceae</taxon>
        <taxon>Bacillus</taxon>
    </lineage>
</organism>
<protein>
    <recommendedName>
        <fullName evidence="1">Methylglyoxal synthase</fullName>
        <shortName evidence="1">MGS</shortName>
        <ecNumber evidence="1">4.2.3.3</ecNumber>
    </recommendedName>
</protein>
<dbReference type="EC" id="4.2.3.3" evidence="1"/>
<dbReference type="EMBL" id="L38424">
    <property type="protein sequence ID" value="AAA92875.1"/>
    <property type="molecule type" value="Genomic_DNA"/>
</dbReference>
<dbReference type="EMBL" id="L47709">
    <property type="protein sequence ID" value="AAB38443.1"/>
    <property type="molecule type" value="Genomic_DNA"/>
</dbReference>
<dbReference type="EMBL" id="AL009126">
    <property type="protein sequence ID" value="CAB14164.1"/>
    <property type="molecule type" value="Genomic_DNA"/>
</dbReference>
<dbReference type="PIR" id="E69937">
    <property type="entry name" value="E69937"/>
</dbReference>
<dbReference type="RefSeq" id="NP_390129.1">
    <property type="nucleotide sequence ID" value="NC_000964.3"/>
</dbReference>
<dbReference type="RefSeq" id="WP_003230640.1">
    <property type="nucleotide sequence ID" value="NZ_OZ025638.1"/>
</dbReference>
<dbReference type="PDB" id="6F2C">
    <property type="method" value="X-ray"/>
    <property type="resolution" value="2.34 A"/>
    <property type="chains" value="A/B/C/D/E/F/G/H/I/J/K/L=1-137"/>
</dbReference>
<dbReference type="PDBsum" id="6F2C"/>
<dbReference type="SMR" id="P42980"/>
<dbReference type="FunCoup" id="P42980">
    <property type="interactions" value="95"/>
</dbReference>
<dbReference type="STRING" id="224308.BSU22480"/>
<dbReference type="PaxDb" id="224308-BSU22480"/>
<dbReference type="EnsemblBacteria" id="CAB14164">
    <property type="protein sequence ID" value="CAB14164"/>
    <property type="gene ID" value="BSU_22480"/>
</dbReference>
<dbReference type="GeneID" id="939027"/>
<dbReference type="KEGG" id="bsu:BSU22480"/>
<dbReference type="PATRIC" id="fig|224308.179.peg.2452"/>
<dbReference type="eggNOG" id="COG1803">
    <property type="taxonomic scope" value="Bacteria"/>
</dbReference>
<dbReference type="InParanoid" id="P42980"/>
<dbReference type="OrthoDB" id="9787147at2"/>
<dbReference type="PhylomeDB" id="P42980"/>
<dbReference type="BioCyc" id="BSUB:BSU22480-MONOMER"/>
<dbReference type="BRENDA" id="4.2.3.3">
    <property type="organism ID" value="658"/>
</dbReference>
<dbReference type="Proteomes" id="UP000001570">
    <property type="component" value="Chromosome"/>
</dbReference>
<dbReference type="GO" id="GO:0005829">
    <property type="term" value="C:cytosol"/>
    <property type="evidence" value="ECO:0000318"/>
    <property type="project" value="GO_Central"/>
</dbReference>
<dbReference type="GO" id="GO:0008929">
    <property type="term" value="F:methylglyoxal synthase activity"/>
    <property type="evidence" value="ECO:0000314"/>
    <property type="project" value="CACAO"/>
</dbReference>
<dbReference type="GO" id="GO:0019242">
    <property type="term" value="P:methylglyoxal biosynthetic process"/>
    <property type="evidence" value="ECO:0000318"/>
    <property type="project" value="GO_Central"/>
</dbReference>
<dbReference type="CDD" id="cd01422">
    <property type="entry name" value="MGS"/>
    <property type="match status" value="1"/>
</dbReference>
<dbReference type="FunFam" id="3.40.50.1380:FF:000006">
    <property type="entry name" value="Methylglyoxal synthase"/>
    <property type="match status" value="1"/>
</dbReference>
<dbReference type="Gene3D" id="3.40.50.1380">
    <property type="entry name" value="Methylglyoxal synthase-like domain"/>
    <property type="match status" value="1"/>
</dbReference>
<dbReference type="HAMAP" id="MF_00549">
    <property type="entry name" value="Methylglyoxal_synth"/>
    <property type="match status" value="1"/>
</dbReference>
<dbReference type="InterPro" id="IPR004363">
    <property type="entry name" value="Methylgl_synth"/>
</dbReference>
<dbReference type="InterPro" id="IPR018148">
    <property type="entry name" value="Methylglyoxal_synth_AS"/>
</dbReference>
<dbReference type="InterPro" id="IPR011607">
    <property type="entry name" value="MGS-like_dom"/>
</dbReference>
<dbReference type="InterPro" id="IPR036914">
    <property type="entry name" value="MGS-like_dom_sf"/>
</dbReference>
<dbReference type="NCBIfam" id="TIGR00160">
    <property type="entry name" value="MGSA"/>
    <property type="match status" value="1"/>
</dbReference>
<dbReference type="NCBIfam" id="NF003559">
    <property type="entry name" value="PRK05234.1"/>
    <property type="match status" value="1"/>
</dbReference>
<dbReference type="PANTHER" id="PTHR30492">
    <property type="entry name" value="METHYLGLYOXAL SYNTHASE"/>
    <property type="match status" value="1"/>
</dbReference>
<dbReference type="PANTHER" id="PTHR30492:SF0">
    <property type="entry name" value="METHYLGLYOXAL SYNTHASE"/>
    <property type="match status" value="1"/>
</dbReference>
<dbReference type="Pfam" id="PF02142">
    <property type="entry name" value="MGS"/>
    <property type="match status" value="1"/>
</dbReference>
<dbReference type="PIRSF" id="PIRSF006614">
    <property type="entry name" value="Methylglyox_syn"/>
    <property type="match status" value="1"/>
</dbReference>
<dbReference type="SMART" id="SM00851">
    <property type="entry name" value="MGS"/>
    <property type="match status" value="1"/>
</dbReference>
<dbReference type="SUPFAM" id="SSF52335">
    <property type="entry name" value="Methylglyoxal synthase-like"/>
    <property type="match status" value="1"/>
</dbReference>
<dbReference type="PROSITE" id="PS01335">
    <property type="entry name" value="METHYLGLYOXAL_SYNTH"/>
    <property type="match status" value="1"/>
</dbReference>
<dbReference type="PROSITE" id="PS51855">
    <property type="entry name" value="MGS"/>
    <property type="match status" value="1"/>
</dbReference>
<sequence length="137" mass="15128">MKIALIAHDKKKQDMVQFTTAYRDILKNHDLYATGTTGLKIHEATGLQIERFQSGPLGGDQQIGALIAANALDLVIFLRDPLTAQPHEPDVSALIRLCDVYSIPLATNMGTAEILVRTLDEGVFEFRDLLRGEEPNV</sequence>
<feature type="chain" id="PRO_0000178613" description="Methylglyoxal synthase">
    <location>
        <begin position="1"/>
        <end position="137"/>
    </location>
</feature>
<feature type="domain" description="MGS-like" evidence="1">
    <location>
        <begin position="1"/>
        <end position="137"/>
    </location>
</feature>
<feature type="active site" description="Proton donor/acceptor" evidence="1">
    <location>
        <position position="60"/>
    </location>
</feature>
<feature type="binding site" evidence="1">
    <location>
        <position position="8"/>
    </location>
    <ligand>
        <name>substrate</name>
    </ligand>
</feature>
<feature type="binding site" evidence="1">
    <location>
        <position position="12"/>
    </location>
    <ligand>
        <name>substrate</name>
    </ligand>
</feature>
<feature type="binding site" evidence="1">
    <location>
        <begin position="34"/>
        <end position="37"/>
    </location>
    <ligand>
        <name>substrate</name>
    </ligand>
</feature>
<feature type="binding site" evidence="1">
    <location>
        <begin position="54"/>
        <end position="55"/>
    </location>
    <ligand>
        <name>substrate</name>
    </ligand>
</feature>
<feature type="binding site" evidence="1">
    <location>
        <position position="87"/>
    </location>
    <ligand>
        <name>substrate</name>
    </ligand>
</feature>
<feature type="strand" evidence="3">
    <location>
        <begin position="2"/>
        <end position="7"/>
    </location>
</feature>
<feature type="helix" evidence="3">
    <location>
        <begin position="9"/>
        <end position="11"/>
    </location>
</feature>
<feature type="helix" evidence="3">
    <location>
        <begin position="12"/>
        <end position="21"/>
    </location>
</feature>
<feature type="helix" evidence="3">
    <location>
        <begin position="23"/>
        <end position="26"/>
    </location>
</feature>
<feature type="strand" evidence="3">
    <location>
        <begin position="29"/>
        <end position="34"/>
    </location>
</feature>
<feature type="helix" evidence="3">
    <location>
        <begin position="36"/>
        <end position="45"/>
    </location>
</feature>
<feature type="strand" evidence="3">
    <location>
        <begin position="49"/>
        <end position="52"/>
    </location>
</feature>
<feature type="helix" evidence="3">
    <location>
        <begin position="55"/>
        <end position="57"/>
    </location>
</feature>
<feature type="helix" evidence="3">
    <location>
        <begin position="59"/>
        <end position="68"/>
    </location>
</feature>
<feature type="strand" evidence="3">
    <location>
        <begin position="73"/>
        <end position="78"/>
    </location>
</feature>
<feature type="helix" evidence="3">
    <location>
        <begin position="88"/>
        <end position="100"/>
    </location>
</feature>
<feature type="strand" evidence="3">
    <location>
        <begin position="105"/>
        <end position="108"/>
    </location>
</feature>
<feature type="helix" evidence="3">
    <location>
        <begin position="109"/>
        <end position="119"/>
    </location>
</feature>
<accession>P42980</accession>
<proteinExistence type="evidence at protein level"/>